<feature type="chain" id="PRO_0000007338" description="DNA polymerase, 1st part">
    <location>
        <begin position="1"/>
        <end position="494"/>
    </location>
</feature>
<feature type="chain" id="PRO_0000007339" description="Endonuclease PI-TliII">
    <location>
        <begin position="495"/>
        <end position="1032"/>
    </location>
</feature>
<feature type="chain" id="PRO_0000007340" description="DNA polymerase, 2nd part">
    <location>
        <begin position="1033"/>
        <end position="1081"/>
    </location>
</feature>
<feature type="chain" id="PRO_0000007341" description="Endonuclease PI-TliI">
    <location>
        <begin position="1082"/>
        <end position="1471"/>
    </location>
</feature>
<feature type="chain" id="PRO_0000007342" description="DNA polymerase, 3rd part">
    <location>
        <begin position="1472"/>
        <end position="1702"/>
    </location>
</feature>
<feature type="domain" description="DOD-type homing endonuclease 1" evidence="1">
    <location>
        <begin position="776"/>
        <end position="909"/>
    </location>
</feature>
<feature type="domain" description="DOD-type homing endonuclease 2" evidence="1">
    <location>
        <begin position="1229"/>
        <end position="1368"/>
    </location>
</feature>
<organism>
    <name type="scientific">Thermococcus litoralis</name>
    <dbReference type="NCBI Taxonomy" id="2265"/>
    <lineage>
        <taxon>Archaea</taxon>
        <taxon>Methanobacteriati</taxon>
        <taxon>Methanobacteriota</taxon>
        <taxon>Thermococci</taxon>
        <taxon>Thermococcales</taxon>
        <taxon>Thermococcaceae</taxon>
        <taxon>Thermococcus</taxon>
    </lineage>
</organism>
<evidence type="ECO:0000255" key="1">
    <source>
        <dbReference type="PROSITE-ProRule" id="PRU00273"/>
    </source>
</evidence>
<evidence type="ECO:0000305" key="2"/>
<dbReference type="EC" id="2.7.7.7"/>
<dbReference type="EC" id="3.1.-.-"/>
<dbReference type="EMBL" id="M74198">
    <property type="protein sequence ID" value="AAA72100.1"/>
    <property type="molecule type" value="Unassigned_DNA"/>
</dbReference>
<dbReference type="EMBL" id="M74198">
    <property type="protein sequence ID" value="AAA72101.1"/>
    <property type="molecule type" value="Unassigned_DNA"/>
</dbReference>
<dbReference type="PIR" id="S42459">
    <property type="entry name" value="S42459"/>
</dbReference>
<dbReference type="SMR" id="P30317"/>
<dbReference type="GeneID" id="16550440"/>
<dbReference type="OMA" id="YAHNSYY"/>
<dbReference type="BRENDA" id="2.7.7.7">
    <property type="organism ID" value="6302"/>
</dbReference>
<dbReference type="GO" id="GO:0003677">
    <property type="term" value="F:DNA binding"/>
    <property type="evidence" value="ECO:0007669"/>
    <property type="project" value="UniProtKB-KW"/>
</dbReference>
<dbReference type="GO" id="GO:0003887">
    <property type="term" value="F:DNA-directed DNA polymerase activity"/>
    <property type="evidence" value="ECO:0007669"/>
    <property type="project" value="UniProtKB-KW"/>
</dbReference>
<dbReference type="GO" id="GO:0004519">
    <property type="term" value="F:endonuclease activity"/>
    <property type="evidence" value="ECO:0007669"/>
    <property type="project" value="UniProtKB-KW"/>
</dbReference>
<dbReference type="GO" id="GO:0000166">
    <property type="term" value="F:nucleotide binding"/>
    <property type="evidence" value="ECO:0007669"/>
    <property type="project" value="InterPro"/>
</dbReference>
<dbReference type="GO" id="GO:0006261">
    <property type="term" value="P:DNA-templated DNA replication"/>
    <property type="evidence" value="ECO:0007669"/>
    <property type="project" value="TreeGrafter"/>
</dbReference>
<dbReference type="GO" id="GO:0016539">
    <property type="term" value="P:intein-mediated protein splicing"/>
    <property type="evidence" value="ECO:0007669"/>
    <property type="project" value="InterPro"/>
</dbReference>
<dbReference type="GO" id="GO:0006314">
    <property type="term" value="P:intron homing"/>
    <property type="evidence" value="ECO:0007669"/>
    <property type="project" value="UniProtKB-KW"/>
</dbReference>
<dbReference type="CDD" id="cd05780">
    <property type="entry name" value="DNA_polB_Kod1_like_exo"/>
    <property type="match status" value="1"/>
</dbReference>
<dbReference type="CDD" id="cd00081">
    <property type="entry name" value="Hint"/>
    <property type="match status" value="3"/>
</dbReference>
<dbReference type="FunFam" id="3.30.342.10:FF:000015">
    <property type="entry name" value="DNA polymerase"/>
    <property type="match status" value="1"/>
</dbReference>
<dbReference type="FunFam" id="1.10.132.60:FF:000013">
    <property type="entry name" value="DNA polymerase Pol2"/>
    <property type="match status" value="1"/>
</dbReference>
<dbReference type="Gene3D" id="1.10.132.60">
    <property type="entry name" value="DNA polymerase family B, C-terminal domain"/>
    <property type="match status" value="1"/>
</dbReference>
<dbReference type="Gene3D" id="3.30.342.10">
    <property type="entry name" value="DNA Polymerase, chain B, domain 1"/>
    <property type="match status" value="1"/>
</dbReference>
<dbReference type="Gene3D" id="2.170.16.10">
    <property type="entry name" value="Hedgehog/Intein (Hint) domain"/>
    <property type="match status" value="2"/>
</dbReference>
<dbReference type="Gene3D" id="3.10.28.10">
    <property type="entry name" value="Homing endonucleases"/>
    <property type="match status" value="2"/>
</dbReference>
<dbReference type="Gene3D" id="1.10.8.1330">
    <property type="entry name" value="Intein homing endonuclease, domain III"/>
    <property type="match status" value="1"/>
</dbReference>
<dbReference type="Gene3D" id="1.10.10.1010">
    <property type="entry name" value="Intein homing endonuclease, domain IV"/>
    <property type="match status" value="1"/>
</dbReference>
<dbReference type="Gene3D" id="3.90.1600.10">
    <property type="entry name" value="Palm domain of DNA polymerase"/>
    <property type="match status" value="3"/>
</dbReference>
<dbReference type="Gene3D" id="3.30.420.10">
    <property type="entry name" value="Ribonuclease H-like superfamily/Ribonuclease H"/>
    <property type="match status" value="1"/>
</dbReference>
<dbReference type="InterPro" id="IPR006172">
    <property type="entry name" value="DNA-dir_DNA_pol_B"/>
</dbReference>
<dbReference type="InterPro" id="IPR006133">
    <property type="entry name" value="DNA-dir_DNA_pol_B_exonuc"/>
</dbReference>
<dbReference type="InterPro" id="IPR006134">
    <property type="entry name" value="DNA-dir_DNA_pol_B_multi_dom"/>
</dbReference>
<dbReference type="InterPro" id="IPR043502">
    <property type="entry name" value="DNA/RNA_pol_sf"/>
</dbReference>
<dbReference type="InterPro" id="IPR042087">
    <property type="entry name" value="DNA_pol_B_thumb"/>
</dbReference>
<dbReference type="InterPro" id="IPR023211">
    <property type="entry name" value="DNA_pol_palm_dom_sf"/>
</dbReference>
<dbReference type="InterPro" id="IPR050240">
    <property type="entry name" value="DNA_pol_type-B"/>
</dbReference>
<dbReference type="InterPro" id="IPR003586">
    <property type="entry name" value="Hint_dom_C"/>
</dbReference>
<dbReference type="InterPro" id="IPR003587">
    <property type="entry name" value="Hint_dom_N"/>
</dbReference>
<dbReference type="InterPro" id="IPR036844">
    <property type="entry name" value="Hint_dom_sf"/>
</dbReference>
<dbReference type="InterPro" id="IPR027434">
    <property type="entry name" value="Homing_endonucl"/>
</dbReference>
<dbReference type="InterPro" id="IPR006142">
    <property type="entry name" value="INTEIN"/>
</dbReference>
<dbReference type="InterPro" id="IPR030934">
    <property type="entry name" value="Intein_C"/>
</dbReference>
<dbReference type="InterPro" id="IPR004042">
    <property type="entry name" value="Intein_endonuc_central"/>
</dbReference>
<dbReference type="InterPro" id="IPR006141">
    <property type="entry name" value="Intein_N"/>
</dbReference>
<dbReference type="InterPro" id="IPR004860">
    <property type="entry name" value="LAGLIDADG_dom"/>
</dbReference>
<dbReference type="InterPro" id="IPR041005">
    <property type="entry name" value="PI-TkoII_IV"/>
</dbReference>
<dbReference type="InterPro" id="IPR012337">
    <property type="entry name" value="RNaseH-like_sf"/>
</dbReference>
<dbReference type="InterPro" id="IPR036397">
    <property type="entry name" value="RNaseH_sf"/>
</dbReference>
<dbReference type="NCBIfam" id="TIGR01443">
    <property type="entry name" value="intein_Cterm"/>
    <property type="match status" value="2"/>
</dbReference>
<dbReference type="NCBIfam" id="TIGR01445">
    <property type="entry name" value="intein_Nterm"/>
    <property type="match status" value="2"/>
</dbReference>
<dbReference type="NCBIfam" id="TIGR00592">
    <property type="entry name" value="pol2"/>
    <property type="match status" value="2"/>
</dbReference>
<dbReference type="PANTHER" id="PTHR10322">
    <property type="entry name" value="DNA POLYMERASE CATALYTIC SUBUNIT"/>
    <property type="match status" value="1"/>
</dbReference>
<dbReference type="PANTHER" id="PTHR10322:SF23">
    <property type="entry name" value="DNA POLYMERASE DELTA CATALYTIC SUBUNIT"/>
    <property type="match status" value="1"/>
</dbReference>
<dbReference type="Pfam" id="PF00136">
    <property type="entry name" value="DNA_pol_B"/>
    <property type="match status" value="3"/>
</dbReference>
<dbReference type="Pfam" id="PF03104">
    <property type="entry name" value="DNA_pol_B_exo1"/>
    <property type="match status" value="1"/>
</dbReference>
<dbReference type="Pfam" id="PF14890">
    <property type="entry name" value="Intein_splicing"/>
    <property type="match status" value="2"/>
</dbReference>
<dbReference type="Pfam" id="PF14528">
    <property type="entry name" value="LAGLIDADG_3"/>
    <property type="match status" value="2"/>
</dbReference>
<dbReference type="Pfam" id="PF18714">
    <property type="entry name" value="PI-TkoII_IV"/>
    <property type="match status" value="1"/>
</dbReference>
<dbReference type="PRINTS" id="PR00379">
    <property type="entry name" value="INTEIN"/>
</dbReference>
<dbReference type="SMART" id="SM00305">
    <property type="entry name" value="HintC"/>
    <property type="match status" value="2"/>
</dbReference>
<dbReference type="SMART" id="SM00306">
    <property type="entry name" value="HintN"/>
    <property type="match status" value="2"/>
</dbReference>
<dbReference type="SMART" id="SM00486">
    <property type="entry name" value="POLBc"/>
    <property type="match status" value="1"/>
</dbReference>
<dbReference type="SUPFAM" id="SSF56672">
    <property type="entry name" value="DNA/RNA polymerases"/>
    <property type="match status" value="2"/>
</dbReference>
<dbReference type="SUPFAM" id="SSF51294">
    <property type="entry name" value="Hedgehog/intein (Hint) domain"/>
    <property type="match status" value="2"/>
</dbReference>
<dbReference type="SUPFAM" id="SSF55608">
    <property type="entry name" value="Homing endonucleases"/>
    <property type="match status" value="2"/>
</dbReference>
<dbReference type="SUPFAM" id="SSF53098">
    <property type="entry name" value="Ribonuclease H-like"/>
    <property type="match status" value="1"/>
</dbReference>
<dbReference type="PROSITE" id="PS50818">
    <property type="entry name" value="INTEIN_C_TER"/>
    <property type="match status" value="2"/>
</dbReference>
<dbReference type="PROSITE" id="PS50819">
    <property type="entry name" value="INTEIN_ENDONUCLEASE"/>
    <property type="match status" value="2"/>
</dbReference>
<dbReference type="PROSITE" id="PS50817">
    <property type="entry name" value="INTEIN_N_TER"/>
    <property type="match status" value="2"/>
</dbReference>
<keyword id="KW-0068">Autocatalytic cleavage</keyword>
<keyword id="KW-0903">Direct protein sequencing</keyword>
<keyword id="KW-0235">DNA replication</keyword>
<keyword id="KW-0238">DNA-binding</keyword>
<keyword id="KW-0239">DNA-directed DNA polymerase</keyword>
<keyword id="KW-0255">Endonuclease</keyword>
<keyword id="KW-0378">Hydrolase</keyword>
<keyword id="KW-0404">Intron homing</keyword>
<keyword id="KW-0540">Nuclease</keyword>
<keyword id="KW-0548">Nucleotidyltransferase</keyword>
<keyword id="KW-0651">Protein splicing</keyword>
<keyword id="KW-0677">Repeat</keyword>
<keyword id="KW-0808">Transferase</keyword>
<proteinExistence type="evidence at protein level"/>
<sequence>MILDTDYITKDGKPIIRIFKKENGEFKIELDPHFQPYIYALLKDDSAIEEIKAIKGERHGKTVRVLDAVKVRKKFLGREVEVWKLIFEHPQDVPAMRGKIREHPAVVDIYEYDIPFAKRYLIDKGLIPMEGDEELKLLAFDIETFYHEGDEFGKGEIIMISYADEEEARVITWKNIDLPYVDVVSNEREMIKRFVQVVKEKDPDVIITYNGDNFDLPYLIKRAEKLGVRLVLGRDKEHPEPKIQRMGDSFAVEIKGRIHFDLFPVVRRTINLPTYTLEAVYEAVLGKTKSKLGAEEIAAIWETEESMKKLAQYSMEDARATYELGKEFFPMEAELAKLIGQSVWDVSRSSTGNLVEWYLLRVAYARNELAPNKPDEEEYKRRLRTTYLGGYVKEPEKGLWENIIYLDFRSLYPSIIVTHNVSPDTLEKEGCKNYDVAPIVGYRFCKDFPGFIPSILGDLIAMRQDIKKKMKSTIDPIEKKMLDYRQRAIKLLANSILPNEWLPIIENGEIKFVKIGEFINSYMEKQKENVKTVENTEVLEVNNLFAFSFNKKIKESEVKKVKALIRHKYKGKAYEIQLSSGRKINITAGHSLFTVRNGEIKEVSGDGIKEGDLIVAPKKIKLNEKGVSINIPELISDLSEEETADIVMTISAKGRKNFFKGMLRTLRWMFGEENRRIRTFNRYLFHLEKLGLIKLLPRGYEVTDWERLKKYKQLYEKLAGSVKYNGNKREYLVMFNEIKDFISYFPQKELEEWKIGTLNGFRTNCILKVDEDFGKLLGYYVSEGYAGAQKNKTGGISYSVKLYNEDPNVLESMKNVAEKFFGKVRVDRNCVSISKKMAYLVMKCLCGALAENKRIPSVILTSPEPVRWSFLEAYFTGDGDIHPSKRFRLSTKSELLANQLVFLLNSLGISSVKIGFDSGVYRVYINEDLQFPQTSREKNTYYSNLIPKEILRDVFGKEFQKNMTFKKFKELVDSGKLNREKAKLLEFFINGDIVLDRVKSVKEKDYEGYVYDLSVEDNENFLVGFGLLYAHNSYYGYMGYPKARWYSKECAESVTAWGRHYIEMTIREIEEKFGFKVLYADSVSGESEIIIRQNGKIRFVKIKDLFSKVDYSIGEKEYCILEGVEALTLDDDGKLVWKPVPYVMRHRANKRMFRIWLTNSWYIDVTEDHSLIGYLNTSKTKTAKKIGERLKEVKPFELGKAVKSLICPNAPLKDENTKTSEIAVKFWELVGLIVGDGNWGGDSRWAEYYLGLSTGKDAEEIKQKLLEPLKTYGVISNYYPKNEKGDFNILAKSLVKFMKRHFKDEKGRRKIPEFMYELPVTYIEAFLRGLFSADGTVTIRKGVPEIRLTNIDADFLREVRKLLWIVGISNSIFAETTPNRYNGVSTGTYSKHLRIKNKWRFAERIGFLIERKQKRLLEHLKSARVKRNTIDFGFDLVHVKKVEEIPYEGYVYDIEVEETHRFFANNILVHNTDGFYATIPGEKPELIKKKAKEFLNYINSKLPGLLELEYEGFYLRGFFVTKKRYAVIDEEGRITTRGLEVVRRDWSEIAKETQAKVLEAILKEGSVEKAVEVVRDVVEKIAKYRVPLEKLVIHEQITRDLKDYKAIGPHVAIAKRLAARGIKVKPGTIISYIVLKGSGKISDRVILLTEYDPRKHKYDPDYYIENQVLPAVLRILEAFGYRKEDLRYQSSKQTGLDAWLKR</sequence>
<gene>
    <name type="primary">pol</name>
</gene>
<reference key="1">
    <citation type="journal article" date="1992" name="Proc. Natl. Acad. Sci. U.S.A.">
        <title>Intervening sequences in an Archaea DNA polymerase gene.</title>
        <authorList>
            <person name="Perler F.B."/>
            <person name="Comb D.G."/>
            <person name="Jack W.E."/>
            <person name="Moran L.S."/>
            <person name="Qiang B."/>
            <person name="Kucera R.B."/>
            <person name="Benner J."/>
            <person name="Slatko B.E."/>
            <person name="Nwankwo D.O."/>
            <person name="Hempstead S.K."/>
            <person name="Carlow C.K.S."/>
            <person name="Jannasch H."/>
        </authorList>
    </citation>
    <scope>NUCLEOTIDE SEQUENCE [GENOMIC DNA]</scope>
    <scope>PARTIAL PROTEIN SEQUENCE</scope>
</reference>
<reference key="2">
    <citation type="journal article" date="1992" name="Nucleic Acids Res.">
        <title>Protein splicing removes intervening sequences in an archaea DNA polymerase.</title>
        <authorList>
            <person name="Hodges R.A."/>
            <person name="Perler F.B."/>
            <person name="Noren C.J."/>
            <person name="Jack W.E."/>
        </authorList>
    </citation>
    <scope>PROTEIN SPLICING</scope>
</reference>
<protein>
    <recommendedName>
        <fullName>DNA polymerase</fullName>
        <ecNumber>2.7.7.7</ecNumber>
    </recommendedName>
    <alternativeName>
        <fullName>Vent DNA polymerase</fullName>
    </alternativeName>
    <component>
        <recommendedName>
            <fullName>Endonuclease PI-TliII</fullName>
            <ecNumber>3.1.-.-</ecNumber>
        </recommendedName>
        <alternativeName>
            <fullName>IVPS2</fullName>
        </alternativeName>
        <alternativeName>
            <fullName>Tli pol-1 intein</fullName>
        </alternativeName>
    </component>
    <component>
        <recommendedName>
            <fullName>Endonuclease PI-TliI</fullName>
            <ecNumber>3.1.-.-</ecNumber>
        </recommendedName>
        <alternativeName>
            <fullName>IVPS1</fullName>
        </alternativeName>
        <alternativeName>
            <fullName>Tli pol-2 intein</fullName>
        </alternativeName>
    </component>
</protein>
<name>DPOL_THELI</name>
<comment type="function">
    <text>In addition to polymerase activity, this DNA polymerase exhibits 3' to 5' exonuclease activity.</text>
</comment>
<comment type="function">
    <text>Intein encoded endonucleases are thought to mediate intein mobility by site-specific recombination initiated by endonuclease cleavage at the 'homing site' in gene that lack the intein.</text>
</comment>
<comment type="catalytic activity">
    <reaction>
        <text>DNA(n) + a 2'-deoxyribonucleoside 5'-triphosphate = DNA(n+1) + diphosphate</text>
        <dbReference type="Rhea" id="RHEA:22508"/>
        <dbReference type="Rhea" id="RHEA-COMP:17339"/>
        <dbReference type="Rhea" id="RHEA-COMP:17340"/>
        <dbReference type="ChEBI" id="CHEBI:33019"/>
        <dbReference type="ChEBI" id="CHEBI:61560"/>
        <dbReference type="ChEBI" id="CHEBI:173112"/>
        <dbReference type="EC" id="2.7.7.7"/>
    </reaction>
</comment>
<comment type="PTM">
    <text>This protein undergoes a protein self splicing that involves a post-translational excision of the two intervening regions (inteins) followed by peptide ligation.</text>
</comment>
<comment type="biotechnology">
    <text>Used in the PCR method because of its high thermostability and low error rate. Sold by New England Biolabs.</text>
</comment>
<comment type="similarity">
    <text evidence="2">Belongs to the DNA polymerase type-B family.</text>
</comment>
<accession>P30317</accession>